<reference key="1">
    <citation type="journal article" date="2005" name="Genome Res.">
        <title>Sequence, annotation, and analysis of synteny between rice chromosome 3 and diverged grass species.</title>
        <authorList>
            <consortium name="The rice chromosome 3 sequencing consortium"/>
            <person name="Buell C.R."/>
            <person name="Yuan Q."/>
            <person name="Ouyang S."/>
            <person name="Liu J."/>
            <person name="Zhu W."/>
            <person name="Wang A."/>
            <person name="Maiti R."/>
            <person name="Haas B."/>
            <person name="Wortman J."/>
            <person name="Pertea M."/>
            <person name="Jones K.M."/>
            <person name="Kim M."/>
            <person name="Overton L."/>
            <person name="Tsitrin T."/>
            <person name="Fadrosh D."/>
            <person name="Bera J."/>
            <person name="Weaver B."/>
            <person name="Jin S."/>
            <person name="Johri S."/>
            <person name="Reardon M."/>
            <person name="Webb K."/>
            <person name="Hill J."/>
            <person name="Moffat K."/>
            <person name="Tallon L."/>
            <person name="Van Aken S."/>
            <person name="Lewis M."/>
            <person name="Utterback T."/>
            <person name="Feldblyum T."/>
            <person name="Zismann V."/>
            <person name="Iobst S."/>
            <person name="Hsiao J."/>
            <person name="de Vazeille A.R."/>
            <person name="Salzberg S.L."/>
            <person name="White O."/>
            <person name="Fraser C.M."/>
            <person name="Yu Y."/>
            <person name="Kim H."/>
            <person name="Rambo T."/>
            <person name="Currie J."/>
            <person name="Collura K."/>
            <person name="Kernodle-Thompson S."/>
            <person name="Wei F."/>
            <person name="Kudrna K."/>
            <person name="Ammiraju J.S.S."/>
            <person name="Luo M."/>
            <person name="Goicoechea J.L."/>
            <person name="Wing R.A."/>
            <person name="Henry D."/>
            <person name="Oates R."/>
            <person name="Palmer M."/>
            <person name="Pries G."/>
            <person name="Saski C."/>
            <person name="Simmons J."/>
            <person name="Soderlund C."/>
            <person name="Nelson W."/>
            <person name="de la Bastide M."/>
            <person name="Spiegel L."/>
            <person name="Nascimento L."/>
            <person name="Huang E."/>
            <person name="Preston R."/>
            <person name="Zutavern T."/>
            <person name="Palmer L."/>
            <person name="O'Shaughnessy A."/>
            <person name="Dike S."/>
            <person name="McCombie W.R."/>
            <person name="Minx P."/>
            <person name="Cordum H."/>
            <person name="Wilson R."/>
            <person name="Jin W."/>
            <person name="Lee H.R."/>
            <person name="Jiang J."/>
            <person name="Jackson S."/>
        </authorList>
    </citation>
    <scope>NUCLEOTIDE SEQUENCE [LARGE SCALE GENOMIC DNA]</scope>
    <source>
        <strain>cv. Nipponbare</strain>
    </source>
</reference>
<reference key="2">
    <citation type="journal article" date="2005" name="Nature">
        <title>The map-based sequence of the rice genome.</title>
        <authorList>
            <consortium name="International rice genome sequencing project (IRGSP)"/>
        </authorList>
    </citation>
    <scope>NUCLEOTIDE SEQUENCE [LARGE SCALE GENOMIC DNA]</scope>
    <source>
        <strain>cv. Nipponbare</strain>
    </source>
</reference>
<reference key="3">
    <citation type="journal article" date="2008" name="Nucleic Acids Res.">
        <title>The rice annotation project database (RAP-DB): 2008 update.</title>
        <authorList>
            <consortium name="The rice annotation project (RAP)"/>
        </authorList>
    </citation>
    <scope>GENOME REANNOTATION</scope>
    <source>
        <strain>cv. Nipponbare</strain>
    </source>
</reference>
<reference key="4">
    <citation type="journal article" date="2013" name="Rice">
        <title>Improvement of the Oryza sativa Nipponbare reference genome using next generation sequence and optical map data.</title>
        <authorList>
            <person name="Kawahara Y."/>
            <person name="de la Bastide M."/>
            <person name="Hamilton J.P."/>
            <person name="Kanamori H."/>
            <person name="McCombie W.R."/>
            <person name="Ouyang S."/>
            <person name="Schwartz D.C."/>
            <person name="Tanaka T."/>
            <person name="Wu J."/>
            <person name="Zhou S."/>
            <person name="Childs K.L."/>
            <person name="Davidson R.M."/>
            <person name="Lin H."/>
            <person name="Quesada-Ocampo L."/>
            <person name="Vaillancourt B."/>
            <person name="Sakai H."/>
            <person name="Lee S.S."/>
            <person name="Kim J."/>
            <person name="Numa H."/>
            <person name="Itoh T."/>
            <person name="Buell C.R."/>
            <person name="Matsumoto T."/>
        </authorList>
    </citation>
    <scope>GENOME REANNOTATION</scope>
    <source>
        <strain>cv. Nipponbare</strain>
    </source>
</reference>
<reference key="5">
    <citation type="journal article" date="2015" name="Plant J.">
        <title>Loss of function mutations in the rice chromomethylase OsCMT3a cause a burst of transposition.</title>
        <authorList>
            <person name="Cheng C."/>
            <person name="Tarutani Y."/>
            <person name="Miyao A."/>
            <person name="Ito T."/>
            <person name="Yamazaki M."/>
            <person name="Sakai H."/>
            <person name="Fukai E."/>
            <person name="Hirochika H."/>
        </authorList>
    </citation>
    <scope>NUCLEOTIDE SEQUENCE [GENOMIC DNA] OF 309-998</scope>
    <scope>FUNCTION</scope>
    <scope>DISRUPTION PHENOTYPE</scope>
    <source>
        <strain>cv. Nipponbare</strain>
    </source>
</reference>
<keyword id="KW-0238">DNA-binding</keyword>
<keyword id="KW-0489">Methyltransferase</keyword>
<keyword id="KW-0539">Nucleus</keyword>
<keyword id="KW-1185">Reference proteome</keyword>
<keyword id="KW-0949">S-adenosyl-L-methionine</keyword>
<keyword id="KW-0808">Transferase</keyword>
<protein>
    <recommendedName>
        <fullName evidence="8">DNA (cytosine-5)-methyltransferase CMT1</fullName>
        <ecNumber evidence="8">2.1.1.37</ecNumber>
    </recommendedName>
    <alternativeName>
        <fullName evidence="8">Chromomethylase 1</fullName>
    </alternativeName>
    <alternativeName>
        <fullName evidence="7">OsMET3b</fullName>
    </alternativeName>
</protein>
<sequence length="1059" mass="118880">MVPEPAPAAATEPRRSTRRRLMTAAAMEAEAEAVADLDEIDREMSRAESRKRQRRTAKEKPGARKGATEWKPEDVEKAAAAEGVAELDEIDREMPRPELRKRQRRTAKEKPSAHEGATEWKPEDVEKAAAQEPEGTELDSGLSPAESRGKRQRGVEKVKRRTRKKTAKEKTKETTEKSAAQAPEKMKVNDAGGALAEDVCADEPDAEQMAMEEEEEAADVLEAEERMGKCVGEGSAEKAATRKRVARPSTARRVEDSDDHFVGDPVPDDEARQRWPVRYSRKGSDSLLKQEPDEDEEMKARCHYLAANVDDEIYHLDDDVYVKAGPDEENYIGRITEFFEGVDRGSYFSCQWFFRTADTVISSKLLKVHDHRHNHKRVFLSKEKNDNLIECIVSKVKIAHVDPNMTPQARAHAISDCDLYYDMSYSVAYSTFANLPADNDGALGSEATSNISCDDADNSSKGKLSADIVAPYSEQTETASLLDLYSGCGAMSTGLCLGFAFSGINLETRWAVDINKYACACLKHNHPYSQVRNEKTEDFLALIQQWDALCRKYVVHKNDTLEPSIDMPLNDADDVNEPLPEDIFDVEELLEICYGDPSNTGKNGLWFKVRWKGYDPSYDTWEPIDGLSDCPERIKEFVEKGHKENILPLPGAVDVICGGPPCQGISGFNRFRKHNDPLEDEKNKQLVVFMDIVKYLRPKYVLMENVVDILKFADGFLGRYAMSCLVAMNYQARLGMMAAGYYGLPQFRMRAFLWGALPSMVLPKFPLPTHDAVVRGIVPTTFSQSVVAYNEVDTRCLRKALLLADAISDLPKVGNDQPKDVIEYSVAPKTEFQRYIRNNRKDIQDYSFRGDDPSEEGKLFDHQPLKLNKDDYERVQRIPVKKGANFRDLKGVIVGPDNTVRLDPNISRERLSSGKPLVPDYAISFVKGKSTKPFGRLWWDETVPTVVTRAEPHNQIILHPSQDRVLTIRENARLQGFPDYYRLIGPLKEKYIQVGNAVAIPVARALGYALGLAYRGESDGDRAVLKLPESFIYADQETVVKSSAGTPGSEIADSEQLFE</sequence>
<feature type="chain" id="PRO_0000438156" description="DNA (cytosine-5)-methyltransferase CMT1">
    <location>
        <begin position="1"/>
        <end position="1059"/>
    </location>
</feature>
<feature type="domain" description="BAH" evidence="3">
    <location>
        <begin position="312"/>
        <end position="436"/>
    </location>
</feature>
<feature type="domain" description="SAM-dependent MTase C5-type" evidence="4">
    <location>
        <begin position="479"/>
        <end position="1017"/>
    </location>
</feature>
<feature type="domain" description="Chromo" evidence="2">
    <location>
        <begin position="584"/>
        <end position="649"/>
    </location>
</feature>
<feature type="region of interest" description="Disordered" evidence="5">
    <location>
        <begin position="1"/>
        <end position="196"/>
    </location>
</feature>
<feature type="region of interest" description="Disordered" evidence="5">
    <location>
        <begin position="230"/>
        <end position="272"/>
    </location>
</feature>
<feature type="compositionally biased region" description="Acidic residues" evidence="5">
    <location>
        <begin position="29"/>
        <end position="41"/>
    </location>
</feature>
<feature type="compositionally biased region" description="Basic and acidic residues" evidence="5">
    <location>
        <begin position="42"/>
        <end position="79"/>
    </location>
</feature>
<feature type="compositionally biased region" description="Basic and acidic residues" evidence="5">
    <location>
        <begin position="92"/>
        <end position="129"/>
    </location>
</feature>
<feature type="compositionally biased region" description="Basic and acidic residues" evidence="5">
    <location>
        <begin position="147"/>
        <end position="157"/>
    </location>
</feature>
<feature type="compositionally biased region" description="Basic residues" evidence="5">
    <location>
        <begin position="158"/>
        <end position="167"/>
    </location>
</feature>
<feature type="compositionally biased region" description="Basic and acidic residues" evidence="5">
    <location>
        <begin position="252"/>
        <end position="262"/>
    </location>
</feature>
<feature type="active site" evidence="4">
    <location>
        <position position="662"/>
    </location>
</feature>
<proteinExistence type="inferred from homology"/>
<organism>
    <name type="scientific">Oryza sativa subsp. japonica</name>
    <name type="common">Rice</name>
    <dbReference type="NCBI Taxonomy" id="39947"/>
    <lineage>
        <taxon>Eukaryota</taxon>
        <taxon>Viridiplantae</taxon>
        <taxon>Streptophyta</taxon>
        <taxon>Embryophyta</taxon>
        <taxon>Tracheophyta</taxon>
        <taxon>Spermatophyta</taxon>
        <taxon>Magnoliopsida</taxon>
        <taxon>Liliopsida</taxon>
        <taxon>Poales</taxon>
        <taxon>Poaceae</taxon>
        <taxon>BOP clade</taxon>
        <taxon>Oryzoideae</taxon>
        <taxon>Oryzeae</taxon>
        <taxon>Oryzinae</taxon>
        <taxon>Oryza</taxon>
        <taxon>Oryza sativa</taxon>
    </lineage>
</organism>
<comment type="function">
    <text evidence="1 9">Involved in CpXpG DNA methylation (By similarity). May not play a major role in maintaining CpXpG methylation (Probable).</text>
</comment>
<comment type="catalytic activity">
    <reaction evidence="8">
        <text>a 2'-deoxycytidine in DNA + S-adenosyl-L-methionine = a 5-methyl-2'-deoxycytidine in DNA + S-adenosyl-L-homocysteine + H(+)</text>
        <dbReference type="Rhea" id="RHEA:13681"/>
        <dbReference type="Rhea" id="RHEA-COMP:11369"/>
        <dbReference type="Rhea" id="RHEA-COMP:11370"/>
        <dbReference type="ChEBI" id="CHEBI:15378"/>
        <dbReference type="ChEBI" id="CHEBI:57856"/>
        <dbReference type="ChEBI" id="CHEBI:59789"/>
        <dbReference type="ChEBI" id="CHEBI:85452"/>
        <dbReference type="ChEBI" id="CHEBI:85454"/>
        <dbReference type="EC" id="2.1.1.37"/>
    </reaction>
</comment>
<comment type="subcellular location">
    <subcellularLocation>
        <location evidence="8">Nucleus</location>
    </subcellularLocation>
</comment>
<comment type="disruption phenotype">
    <text evidence="6">No visible phenotype under normal growth conditions.</text>
</comment>
<comment type="similarity">
    <text evidence="4">Belongs to the class I-like SAM-binding methyltransferase superfamily. C5-methyltransferase family.</text>
</comment>
<comment type="sequence caution" evidence="8">
    <conflict type="erroneous gene model prediction">
        <sequence resource="EMBL-CDS" id="BAF11356"/>
    </conflict>
</comment>
<comment type="sequence caution" evidence="8">
    <conflict type="erroneous gene model prediction">
        <sequence resource="EMBL-CDS" id="BAS83066"/>
    </conflict>
</comment>
<accession>A0A0P0VUY4</accession>
<accession>C0SQ90</accession>
<accession>Q0DTT2</accession>
<accession>Q8H854</accession>
<evidence type="ECO:0000250" key="1">
    <source>
        <dbReference type="UniProtKB" id="C0SQ89"/>
    </source>
</evidence>
<evidence type="ECO:0000255" key="2">
    <source>
        <dbReference type="PROSITE-ProRule" id="PRU00053"/>
    </source>
</evidence>
<evidence type="ECO:0000255" key="3">
    <source>
        <dbReference type="PROSITE-ProRule" id="PRU00370"/>
    </source>
</evidence>
<evidence type="ECO:0000255" key="4">
    <source>
        <dbReference type="PROSITE-ProRule" id="PRU01016"/>
    </source>
</evidence>
<evidence type="ECO:0000256" key="5">
    <source>
        <dbReference type="SAM" id="MobiDB-lite"/>
    </source>
</evidence>
<evidence type="ECO:0000269" key="6">
    <source>
    </source>
</evidence>
<evidence type="ECO:0000303" key="7">
    <source>
    </source>
</evidence>
<evidence type="ECO:0000305" key="8"/>
<evidence type="ECO:0000305" key="9">
    <source>
    </source>
</evidence>
<evidence type="ECO:0000312" key="10">
    <source>
        <dbReference type="EMBL" id="AAN60988.1"/>
    </source>
</evidence>
<evidence type="ECO:0000312" key="11">
    <source>
        <dbReference type="EMBL" id="ABF94750.1"/>
    </source>
</evidence>
<evidence type="ECO:0000312" key="12">
    <source>
        <dbReference type="EMBL" id="BAS83066.1"/>
    </source>
</evidence>
<dbReference type="EC" id="2.1.1.37" evidence="8"/>
<dbReference type="EMBL" id="AC104473">
    <property type="protein sequence ID" value="AAN60988.1"/>
    <property type="molecule type" value="Genomic_DNA"/>
</dbReference>
<dbReference type="EMBL" id="DP000009">
    <property type="protein sequence ID" value="ABF94750.1"/>
    <property type="molecule type" value="Genomic_DNA"/>
</dbReference>
<dbReference type="EMBL" id="AP008209">
    <property type="protein sequence ID" value="BAF11356.2"/>
    <property type="status" value="ALT_SEQ"/>
    <property type="molecule type" value="Genomic_DNA"/>
</dbReference>
<dbReference type="EMBL" id="AP014959">
    <property type="protein sequence ID" value="BAS83066.1"/>
    <property type="status" value="ALT_SEQ"/>
    <property type="molecule type" value="Genomic_DNA"/>
</dbReference>
<dbReference type="EMBL" id="AB360584">
    <property type="protein sequence ID" value="BAH37020.1"/>
    <property type="molecule type" value="Genomic_DNA"/>
</dbReference>
<dbReference type="RefSeq" id="XP_015630016.1">
    <property type="nucleotide sequence ID" value="XM_015774530.1"/>
</dbReference>
<dbReference type="SMR" id="A0A0P0VUY4"/>
<dbReference type="FunCoup" id="A0A0P0VUY4">
    <property type="interactions" value="300"/>
</dbReference>
<dbReference type="STRING" id="39947.A0A0P0VUY4"/>
<dbReference type="REBASE" id="11925">
    <property type="entry name" value="M.OsaCMT3P"/>
</dbReference>
<dbReference type="PaxDb" id="39947-A0A0P0VUY4"/>
<dbReference type="EnsemblPlants" id="Os03t0226800-01">
    <property type="protein sequence ID" value="Os03t0226800-01"/>
    <property type="gene ID" value="Os03g0226800"/>
</dbReference>
<dbReference type="Gramene" id="Os03t0226800-01">
    <property type="protein sequence ID" value="Os03t0226800-01"/>
    <property type="gene ID" value="Os03g0226800"/>
</dbReference>
<dbReference type="KEGG" id="dosa:Os03g0226800"/>
<dbReference type="eggNOG" id="ENOG502QW29">
    <property type="taxonomic scope" value="Eukaryota"/>
</dbReference>
<dbReference type="InParanoid" id="A0A0P0VUY4"/>
<dbReference type="OMA" id="ARNHYVE"/>
<dbReference type="OrthoDB" id="5376140at2759"/>
<dbReference type="BRENDA" id="2.1.1.37">
    <property type="organism ID" value="4460"/>
</dbReference>
<dbReference type="Proteomes" id="UP000000763">
    <property type="component" value="Chromosome 3"/>
</dbReference>
<dbReference type="Proteomes" id="UP000059680">
    <property type="component" value="Chromosome 3"/>
</dbReference>
<dbReference type="GO" id="GO:0005634">
    <property type="term" value="C:nucleus"/>
    <property type="evidence" value="ECO:0000318"/>
    <property type="project" value="GO_Central"/>
</dbReference>
<dbReference type="GO" id="GO:0003682">
    <property type="term" value="F:chromatin binding"/>
    <property type="evidence" value="ECO:0007669"/>
    <property type="project" value="InterPro"/>
</dbReference>
<dbReference type="GO" id="GO:0003886">
    <property type="term" value="F:DNA (cytosine-5-)-methyltransferase activity"/>
    <property type="evidence" value="ECO:0000318"/>
    <property type="project" value="GO_Central"/>
</dbReference>
<dbReference type="GO" id="GO:0003677">
    <property type="term" value="F:DNA binding"/>
    <property type="evidence" value="ECO:0000318"/>
    <property type="project" value="GO_Central"/>
</dbReference>
<dbReference type="GO" id="GO:0006346">
    <property type="term" value="P:DNA methylation-dependent constitutive heterochromatin formation"/>
    <property type="evidence" value="ECO:0007669"/>
    <property type="project" value="InterPro"/>
</dbReference>
<dbReference type="GO" id="GO:0032259">
    <property type="term" value="P:methylation"/>
    <property type="evidence" value="ECO:0007669"/>
    <property type="project" value="UniProtKB-KW"/>
</dbReference>
<dbReference type="GO" id="GO:0044027">
    <property type="term" value="P:negative regulation of gene expression via chromosomal CpG island methylation"/>
    <property type="evidence" value="ECO:0000318"/>
    <property type="project" value="GO_Central"/>
</dbReference>
<dbReference type="CDD" id="cd18635">
    <property type="entry name" value="CD_CMT3_like"/>
    <property type="match status" value="1"/>
</dbReference>
<dbReference type="FunFam" id="2.30.30.490:FF:000011">
    <property type="entry name" value="DNA (cytosine-5)-methyltransferase 1"/>
    <property type="match status" value="1"/>
</dbReference>
<dbReference type="FunFam" id="3.40.50.150:FF:000143">
    <property type="entry name" value="DNA (cytosine-5)-methyltransferase 1"/>
    <property type="match status" value="1"/>
</dbReference>
<dbReference type="FunFam" id="3.90.120.10:FF:000003">
    <property type="entry name" value="DNA (cytosine-5)-methyltransferase 1"/>
    <property type="match status" value="1"/>
</dbReference>
<dbReference type="Gene3D" id="2.30.30.490">
    <property type="match status" value="1"/>
</dbReference>
<dbReference type="Gene3D" id="3.90.120.10">
    <property type="entry name" value="DNA Methylase, subunit A, domain 2"/>
    <property type="match status" value="1"/>
</dbReference>
<dbReference type="Gene3D" id="3.40.50.150">
    <property type="entry name" value="Vaccinia Virus protein VP39"/>
    <property type="match status" value="1"/>
</dbReference>
<dbReference type="InterPro" id="IPR001025">
    <property type="entry name" value="BAH_dom"/>
</dbReference>
<dbReference type="InterPro" id="IPR043151">
    <property type="entry name" value="BAH_sf"/>
</dbReference>
<dbReference type="InterPro" id="IPR050390">
    <property type="entry name" value="C5-Methyltransferase"/>
</dbReference>
<dbReference type="InterPro" id="IPR018117">
    <property type="entry name" value="C5_DNA_meth_AS"/>
</dbReference>
<dbReference type="InterPro" id="IPR001525">
    <property type="entry name" value="C5_MeTfrase"/>
</dbReference>
<dbReference type="InterPro" id="IPR016197">
    <property type="entry name" value="Chromo-like_dom_sf"/>
</dbReference>
<dbReference type="InterPro" id="IPR000953">
    <property type="entry name" value="Chromo/chromo_shadow_dom"/>
</dbReference>
<dbReference type="InterPro" id="IPR023780">
    <property type="entry name" value="Chromo_domain"/>
</dbReference>
<dbReference type="InterPro" id="IPR023779">
    <property type="entry name" value="Chromodomain_CS"/>
</dbReference>
<dbReference type="InterPro" id="IPR017198">
    <property type="entry name" value="DNMT1-like"/>
</dbReference>
<dbReference type="InterPro" id="IPR029063">
    <property type="entry name" value="SAM-dependent_MTases_sf"/>
</dbReference>
<dbReference type="PANTHER" id="PTHR10629">
    <property type="entry name" value="CYTOSINE-SPECIFIC METHYLTRANSFERASE"/>
    <property type="match status" value="1"/>
</dbReference>
<dbReference type="PANTHER" id="PTHR10629:SF59">
    <property type="entry name" value="DNA (CYTOSINE-5)-METHYLTRANSFERASE CMT1"/>
    <property type="match status" value="1"/>
</dbReference>
<dbReference type="Pfam" id="PF01426">
    <property type="entry name" value="BAH"/>
    <property type="match status" value="1"/>
</dbReference>
<dbReference type="Pfam" id="PF00385">
    <property type="entry name" value="Chromo"/>
    <property type="match status" value="1"/>
</dbReference>
<dbReference type="Pfam" id="PF00145">
    <property type="entry name" value="DNA_methylase"/>
    <property type="match status" value="1"/>
</dbReference>
<dbReference type="PIRSF" id="PIRSF037404">
    <property type="entry name" value="DNMT1"/>
    <property type="match status" value="1"/>
</dbReference>
<dbReference type="PRINTS" id="PR00105">
    <property type="entry name" value="C5METTRFRASE"/>
</dbReference>
<dbReference type="SMART" id="SM00439">
    <property type="entry name" value="BAH"/>
    <property type="match status" value="1"/>
</dbReference>
<dbReference type="SMART" id="SM00298">
    <property type="entry name" value="CHROMO"/>
    <property type="match status" value="1"/>
</dbReference>
<dbReference type="SUPFAM" id="SSF54160">
    <property type="entry name" value="Chromo domain-like"/>
    <property type="match status" value="1"/>
</dbReference>
<dbReference type="SUPFAM" id="SSF53335">
    <property type="entry name" value="S-adenosyl-L-methionine-dependent methyltransferases"/>
    <property type="match status" value="1"/>
</dbReference>
<dbReference type="PROSITE" id="PS51038">
    <property type="entry name" value="BAH"/>
    <property type="match status" value="1"/>
</dbReference>
<dbReference type="PROSITE" id="PS00094">
    <property type="entry name" value="C5_MTASE_1"/>
    <property type="match status" value="1"/>
</dbReference>
<dbReference type="PROSITE" id="PS00598">
    <property type="entry name" value="CHROMO_1"/>
    <property type="match status" value="1"/>
</dbReference>
<dbReference type="PROSITE" id="PS50013">
    <property type="entry name" value="CHROMO_2"/>
    <property type="match status" value="1"/>
</dbReference>
<dbReference type="PROSITE" id="PS51679">
    <property type="entry name" value="SAM_MT_C5"/>
    <property type="match status" value="1"/>
</dbReference>
<name>CMT1_ORYSJ</name>
<gene>
    <name evidence="8" type="primary">CMT1</name>
    <name evidence="12" type="ordered locus">Os03g0226800</name>
    <name evidence="11" type="ordered locus">LOC_Os03g12570</name>
    <name evidence="10" type="ORF">OJ1626B05.3</name>
</gene>